<protein>
    <recommendedName>
        <fullName evidence="1">Large-conductance mechanosensitive channel</fullName>
    </recommendedName>
</protein>
<dbReference type="EMBL" id="CP000817">
    <property type="protein sequence ID" value="ACA40888.1"/>
    <property type="molecule type" value="Genomic_DNA"/>
</dbReference>
<dbReference type="RefSeq" id="WP_008180473.1">
    <property type="nucleotide sequence ID" value="NC_010382.1"/>
</dbReference>
<dbReference type="SMR" id="B1HRA8"/>
<dbReference type="EnsemblBacteria" id="ACA40888">
    <property type="protein sequence ID" value="ACA40888"/>
    <property type="gene ID" value="Bsph_3396"/>
</dbReference>
<dbReference type="GeneID" id="29441342"/>
<dbReference type="KEGG" id="lsp:Bsph_3396"/>
<dbReference type="HOGENOM" id="CLU_095787_0_0_9"/>
<dbReference type="Proteomes" id="UP000002164">
    <property type="component" value="Chromosome"/>
</dbReference>
<dbReference type="GO" id="GO:0005886">
    <property type="term" value="C:plasma membrane"/>
    <property type="evidence" value="ECO:0007669"/>
    <property type="project" value="UniProtKB-SubCell"/>
</dbReference>
<dbReference type="GO" id="GO:0008381">
    <property type="term" value="F:mechanosensitive monoatomic ion channel activity"/>
    <property type="evidence" value="ECO:0007669"/>
    <property type="project" value="UniProtKB-UniRule"/>
</dbReference>
<dbReference type="Gene3D" id="1.10.1200.120">
    <property type="entry name" value="Large-conductance mechanosensitive channel, MscL, domain 1"/>
    <property type="match status" value="1"/>
</dbReference>
<dbReference type="HAMAP" id="MF_00115">
    <property type="entry name" value="MscL"/>
    <property type="match status" value="1"/>
</dbReference>
<dbReference type="InterPro" id="IPR019823">
    <property type="entry name" value="Mechanosensitive_channel_CS"/>
</dbReference>
<dbReference type="InterPro" id="IPR001185">
    <property type="entry name" value="MS_channel"/>
</dbReference>
<dbReference type="InterPro" id="IPR037673">
    <property type="entry name" value="MSC/AndL"/>
</dbReference>
<dbReference type="InterPro" id="IPR036019">
    <property type="entry name" value="MscL_channel"/>
</dbReference>
<dbReference type="NCBIfam" id="TIGR00220">
    <property type="entry name" value="mscL"/>
    <property type="match status" value="1"/>
</dbReference>
<dbReference type="PANTHER" id="PTHR30266:SF2">
    <property type="entry name" value="LARGE-CONDUCTANCE MECHANOSENSITIVE CHANNEL"/>
    <property type="match status" value="1"/>
</dbReference>
<dbReference type="PANTHER" id="PTHR30266">
    <property type="entry name" value="MECHANOSENSITIVE CHANNEL MSCL"/>
    <property type="match status" value="1"/>
</dbReference>
<dbReference type="Pfam" id="PF01741">
    <property type="entry name" value="MscL"/>
    <property type="match status" value="1"/>
</dbReference>
<dbReference type="PRINTS" id="PR01264">
    <property type="entry name" value="MECHCHANNEL"/>
</dbReference>
<dbReference type="SUPFAM" id="SSF81330">
    <property type="entry name" value="Gated mechanosensitive channel"/>
    <property type="match status" value="1"/>
</dbReference>
<dbReference type="PROSITE" id="PS01327">
    <property type="entry name" value="MSCL"/>
    <property type="match status" value="1"/>
</dbReference>
<evidence type="ECO:0000255" key="1">
    <source>
        <dbReference type="HAMAP-Rule" id="MF_00115"/>
    </source>
</evidence>
<proteinExistence type="inferred from homology"/>
<feature type="chain" id="PRO_1000094904" description="Large-conductance mechanosensitive channel">
    <location>
        <begin position="1"/>
        <end position="129"/>
    </location>
</feature>
<feature type="transmembrane region" description="Helical" evidence="1">
    <location>
        <begin position="14"/>
        <end position="34"/>
    </location>
</feature>
<feature type="transmembrane region" description="Helical" evidence="1">
    <location>
        <begin position="38"/>
        <end position="58"/>
    </location>
</feature>
<feature type="transmembrane region" description="Helical" evidence="1">
    <location>
        <begin position="67"/>
        <end position="87"/>
    </location>
</feature>
<sequence>MWKDFKEFAMKGNIIDLAVAVVIGGAFGKIVTSLVENIIMPLVGVLTGGIDLTASFVYGSGDAQIKLGVFLQSIIDFLIIAFAIFMALRIMTKLTNKKEEAVVEEPTPELDAKEELLKEIRDLLKKEQA</sequence>
<gene>
    <name evidence="1" type="primary">mscL</name>
    <name type="ordered locus">Bsph_3396</name>
</gene>
<keyword id="KW-1003">Cell membrane</keyword>
<keyword id="KW-0407">Ion channel</keyword>
<keyword id="KW-0406">Ion transport</keyword>
<keyword id="KW-0472">Membrane</keyword>
<keyword id="KW-0812">Transmembrane</keyword>
<keyword id="KW-1133">Transmembrane helix</keyword>
<keyword id="KW-0813">Transport</keyword>
<reference key="1">
    <citation type="journal article" date="2008" name="J. Bacteriol.">
        <title>Complete genome sequence of the mosquitocidal bacterium Bacillus sphaericus C3-41 and comparison with those of closely related Bacillus species.</title>
        <authorList>
            <person name="Hu X."/>
            <person name="Fan W."/>
            <person name="Han B."/>
            <person name="Liu H."/>
            <person name="Zheng D."/>
            <person name="Li Q."/>
            <person name="Dong W."/>
            <person name="Yan J."/>
            <person name="Gao M."/>
            <person name="Berry C."/>
            <person name="Yuan Z."/>
        </authorList>
    </citation>
    <scope>NUCLEOTIDE SEQUENCE [LARGE SCALE GENOMIC DNA]</scope>
    <source>
        <strain>C3-41</strain>
    </source>
</reference>
<organism>
    <name type="scientific">Lysinibacillus sphaericus (strain C3-41)</name>
    <dbReference type="NCBI Taxonomy" id="444177"/>
    <lineage>
        <taxon>Bacteria</taxon>
        <taxon>Bacillati</taxon>
        <taxon>Bacillota</taxon>
        <taxon>Bacilli</taxon>
        <taxon>Bacillales</taxon>
        <taxon>Bacillaceae</taxon>
        <taxon>Lysinibacillus</taxon>
    </lineage>
</organism>
<accession>B1HRA8</accession>
<comment type="function">
    <text evidence="1">Channel that opens in response to stretch forces in the membrane lipid bilayer. May participate in the regulation of osmotic pressure changes within the cell.</text>
</comment>
<comment type="subunit">
    <text evidence="1">Homopentamer.</text>
</comment>
<comment type="subcellular location">
    <subcellularLocation>
        <location evidence="1">Cell membrane</location>
        <topology evidence="1">Multi-pass membrane protein</topology>
    </subcellularLocation>
</comment>
<comment type="similarity">
    <text evidence="1">Belongs to the MscL family.</text>
</comment>
<name>MSCL_LYSSC</name>